<organism>
    <name type="scientific">Escherichia coli (strain UTI89 / UPEC)</name>
    <dbReference type="NCBI Taxonomy" id="364106"/>
    <lineage>
        <taxon>Bacteria</taxon>
        <taxon>Pseudomonadati</taxon>
        <taxon>Pseudomonadota</taxon>
        <taxon>Gammaproteobacteria</taxon>
        <taxon>Enterobacterales</taxon>
        <taxon>Enterobacteriaceae</taxon>
        <taxon>Escherichia</taxon>
    </lineage>
</organism>
<gene>
    <name evidence="1" type="primary">katG</name>
    <name type="ordered locus">UTI89_C4532</name>
</gene>
<dbReference type="EC" id="1.11.1.21" evidence="1"/>
<dbReference type="EMBL" id="CP000243">
    <property type="protein sequence ID" value="ABE09944.1"/>
    <property type="status" value="ALT_INIT"/>
    <property type="molecule type" value="Genomic_DNA"/>
</dbReference>
<dbReference type="RefSeq" id="WP_001556077.1">
    <property type="nucleotide sequence ID" value="NZ_CP064825.1"/>
</dbReference>
<dbReference type="SMR" id="Q1R3X0"/>
<dbReference type="PeroxiBase" id="3309">
    <property type="entry name" value="EcoCP01_UTI89"/>
</dbReference>
<dbReference type="KEGG" id="eci:UTI89_C4532"/>
<dbReference type="HOGENOM" id="CLU_025424_2_0_6"/>
<dbReference type="Proteomes" id="UP000001952">
    <property type="component" value="Chromosome"/>
</dbReference>
<dbReference type="GO" id="GO:0005829">
    <property type="term" value="C:cytosol"/>
    <property type="evidence" value="ECO:0007669"/>
    <property type="project" value="TreeGrafter"/>
</dbReference>
<dbReference type="GO" id="GO:0004096">
    <property type="term" value="F:catalase activity"/>
    <property type="evidence" value="ECO:0007669"/>
    <property type="project" value="UniProtKB-UniRule"/>
</dbReference>
<dbReference type="GO" id="GO:0020037">
    <property type="term" value="F:heme binding"/>
    <property type="evidence" value="ECO:0007669"/>
    <property type="project" value="InterPro"/>
</dbReference>
<dbReference type="GO" id="GO:0046872">
    <property type="term" value="F:metal ion binding"/>
    <property type="evidence" value="ECO:0007669"/>
    <property type="project" value="UniProtKB-KW"/>
</dbReference>
<dbReference type="GO" id="GO:0070301">
    <property type="term" value="P:cellular response to hydrogen peroxide"/>
    <property type="evidence" value="ECO:0007669"/>
    <property type="project" value="TreeGrafter"/>
</dbReference>
<dbReference type="GO" id="GO:0042744">
    <property type="term" value="P:hydrogen peroxide catabolic process"/>
    <property type="evidence" value="ECO:0007669"/>
    <property type="project" value="UniProtKB-KW"/>
</dbReference>
<dbReference type="CDD" id="cd08200">
    <property type="entry name" value="catalase_peroxidase_2"/>
    <property type="match status" value="1"/>
</dbReference>
<dbReference type="FunFam" id="1.10.420.10:FF:000002">
    <property type="entry name" value="Catalase-peroxidase"/>
    <property type="match status" value="1"/>
</dbReference>
<dbReference type="FunFam" id="1.10.420.10:FF:000004">
    <property type="entry name" value="Catalase-peroxidase"/>
    <property type="match status" value="1"/>
</dbReference>
<dbReference type="FunFam" id="1.10.520.10:FF:000002">
    <property type="entry name" value="Catalase-peroxidase"/>
    <property type="match status" value="1"/>
</dbReference>
<dbReference type="Gene3D" id="1.10.520.10">
    <property type="match status" value="2"/>
</dbReference>
<dbReference type="Gene3D" id="1.10.420.10">
    <property type="entry name" value="Peroxidase, domain 2"/>
    <property type="match status" value="2"/>
</dbReference>
<dbReference type="HAMAP" id="MF_01961">
    <property type="entry name" value="Catal_peroxid"/>
    <property type="match status" value="1"/>
</dbReference>
<dbReference type="InterPro" id="IPR000763">
    <property type="entry name" value="Catalase_peroxidase"/>
</dbReference>
<dbReference type="InterPro" id="IPR002016">
    <property type="entry name" value="Haem_peroxidase"/>
</dbReference>
<dbReference type="InterPro" id="IPR010255">
    <property type="entry name" value="Haem_peroxidase_sf"/>
</dbReference>
<dbReference type="InterPro" id="IPR019794">
    <property type="entry name" value="Peroxidases_AS"/>
</dbReference>
<dbReference type="InterPro" id="IPR019793">
    <property type="entry name" value="Peroxidases_heam-ligand_BS"/>
</dbReference>
<dbReference type="NCBIfam" id="TIGR00198">
    <property type="entry name" value="cat_per_HPI"/>
    <property type="match status" value="1"/>
</dbReference>
<dbReference type="NCBIfam" id="NF011635">
    <property type="entry name" value="PRK15061.1"/>
    <property type="match status" value="1"/>
</dbReference>
<dbReference type="PANTHER" id="PTHR30555:SF0">
    <property type="entry name" value="CATALASE-PEROXIDASE"/>
    <property type="match status" value="1"/>
</dbReference>
<dbReference type="PANTHER" id="PTHR30555">
    <property type="entry name" value="HYDROPEROXIDASE I, BIFUNCTIONAL CATALASE-PEROXIDASE"/>
    <property type="match status" value="1"/>
</dbReference>
<dbReference type="Pfam" id="PF00141">
    <property type="entry name" value="peroxidase"/>
    <property type="match status" value="2"/>
</dbReference>
<dbReference type="PRINTS" id="PR00460">
    <property type="entry name" value="BPEROXIDASE"/>
</dbReference>
<dbReference type="PRINTS" id="PR00458">
    <property type="entry name" value="PEROXIDASE"/>
</dbReference>
<dbReference type="SUPFAM" id="SSF48113">
    <property type="entry name" value="Heme-dependent peroxidases"/>
    <property type="match status" value="2"/>
</dbReference>
<dbReference type="PROSITE" id="PS00435">
    <property type="entry name" value="PEROXIDASE_1"/>
    <property type="match status" value="1"/>
</dbReference>
<dbReference type="PROSITE" id="PS00436">
    <property type="entry name" value="PEROXIDASE_2"/>
    <property type="match status" value="1"/>
</dbReference>
<dbReference type="PROSITE" id="PS50873">
    <property type="entry name" value="PEROXIDASE_4"/>
    <property type="match status" value="1"/>
</dbReference>
<sequence length="726" mass="79999">MSTSDDIHNTTATGKCPFHQGGHDQSAGGGTTTRDWWPNQLRVDLLNQHSNRSNPLGEDFDYRKEFSKLDYYGLKKDLKALLTESQPWWPADWGSYAGLFIRMAWHGAGTYRSIDGRGGAGRGQQRFAPLNSWPDNVSLDKARRLLWPIKQKYGQKISWADLFILAGNVALESSGFRTFGFGAGREDVWEPDLDVNWGDEKAWLTHRHPEALAKAPLGATEMGLIYVNPEGPDHSGEPLSAAAAIRATFGNMGMNDEETVALIAGGHTLGKTHGAGPTSNVGPDPEAAPIEEQGLGWASTYGSGVGADAITSGLEVVWTQTPTQWSNYFFENLFKYEWVQTRSPAGAIQFEAVDAPEIIPDPFDPSKKRKPTMLVTDLTLRFDPEFEKISRRFLNDPQAFNEAFARAWFKLTHRDMGPKSRYIGPEVPKEDLIWQDPLPQPIYNPTEQDIIDLKFAIADSGLSVSELVSVAWASASTFRGGDKRGGANGARLALMPQRDWDVNAAAVRALPVLEKIQKESGKASLADIIVLAGVVGVEKAASAAGLSIHVPFAPGRVDARQDQTDIEMFELLEPIADGFRNYRARLDVSTTESLLIDKAQQLTLTAPEMTALVGGMRVLGANFDGSKNGVFTDRVGVLSNDFFVNLLDMRYEWKATDESKELFEGRDRETGEVKYTASRADLVFGSNSVLRAVAEVYASSDAHEKFVKDFVAAWVKVMNLDRFDLL</sequence>
<proteinExistence type="inferred from homology"/>
<accession>Q1R3X0</accession>
<reference key="1">
    <citation type="journal article" date="2006" name="Proc. Natl. Acad. Sci. U.S.A.">
        <title>Identification of genes subject to positive selection in uropathogenic strains of Escherichia coli: a comparative genomics approach.</title>
        <authorList>
            <person name="Chen S.L."/>
            <person name="Hung C.-S."/>
            <person name="Xu J."/>
            <person name="Reigstad C.S."/>
            <person name="Magrini V."/>
            <person name="Sabo A."/>
            <person name="Blasiar D."/>
            <person name="Bieri T."/>
            <person name="Meyer R.R."/>
            <person name="Ozersky P."/>
            <person name="Armstrong J.R."/>
            <person name="Fulton R.S."/>
            <person name="Latreille J.P."/>
            <person name="Spieth J."/>
            <person name="Hooton T.M."/>
            <person name="Mardis E.R."/>
            <person name="Hultgren S.J."/>
            <person name="Gordon J.I."/>
        </authorList>
    </citation>
    <scope>NUCLEOTIDE SEQUENCE [LARGE SCALE GENOMIC DNA]</scope>
    <source>
        <strain>UTI89 / UPEC</strain>
    </source>
</reference>
<evidence type="ECO:0000255" key="1">
    <source>
        <dbReference type="HAMAP-Rule" id="MF_01961"/>
    </source>
</evidence>
<evidence type="ECO:0000256" key="2">
    <source>
        <dbReference type="SAM" id="MobiDB-lite"/>
    </source>
</evidence>
<evidence type="ECO:0000305" key="3"/>
<comment type="function">
    <text evidence="1">Bifunctional enzyme with both catalase and broad-spectrum peroxidase activity.</text>
</comment>
<comment type="catalytic activity">
    <reaction evidence="1">
        <text>H2O2 + AH2 = A + 2 H2O</text>
        <dbReference type="Rhea" id="RHEA:30275"/>
        <dbReference type="ChEBI" id="CHEBI:13193"/>
        <dbReference type="ChEBI" id="CHEBI:15377"/>
        <dbReference type="ChEBI" id="CHEBI:16240"/>
        <dbReference type="ChEBI" id="CHEBI:17499"/>
        <dbReference type="EC" id="1.11.1.21"/>
    </reaction>
</comment>
<comment type="catalytic activity">
    <reaction evidence="1">
        <text>2 H2O2 = O2 + 2 H2O</text>
        <dbReference type="Rhea" id="RHEA:20309"/>
        <dbReference type="ChEBI" id="CHEBI:15377"/>
        <dbReference type="ChEBI" id="CHEBI:15379"/>
        <dbReference type="ChEBI" id="CHEBI:16240"/>
        <dbReference type="EC" id="1.11.1.21"/>
    </reaction>
</comment>
<comment type="cofactor">
    <cofactor evidence="1">
        <name>heme b</name>
        <dbReference type="ChEBI" id="CHEBI:60344"/>
    </cofactor>
    <text evidence="1">Binds 1 heme b (iron(II)-protoporphyrin IX) group per dimer.</text>
</comment>
<comment type="subunit">
    <text evidence="1">Homodimer or homotetramer.</text>
</comment>
<comment type="PTM">
    <text evidence="1">Formation of the three residue Trp-Tyr-Met cross-link is important for the catalase, but not the peroxidase activity of the enzyme.</text>
</comment>
<comment type="similarity">
    <text evidence="1">Belongs to the peroxidase family. Peroxidase/catalase subfamily.</text>
</comment>
<comment type="sequence caution" evidence="3">
    <conflict type="erroneous initiation">
        <sequence resource="EMBL-CDS" id="ABE09944"/>
    </conflict>
</comment>
<keyword id="KW-0349">Heme</keyword>
<keyword id="KW-0376">Hydrogen peroxide</keyword>
<keyword id="KW-0408">Iron</keyword>
<keyword id="KW-0479">Metal-binding</keyword>
<keyword id="KW-0560">Oxidoreductase</keyword>
<keyword id="KW-0575">Peroxidase</keyword>
<protein>
    <recommendedName>
        <fullName evidence="1">Catalase-peroxidase</fullName>
        <shortName evidence="1">CP</shortName>
        <ecNumber evidence="1">1.11.1.21</ecNumber>
    </recommendedName>
    <alternativeName>
        <fullName evidence="1">Peroxidase/catalase</fullName>
    </alternativeName>
</protein>
<name>KATG_ECOUT</name>
<feature type="chain" id="PRO_0000354779" description="Catalase-peroxidase">
    <location>
        <begin position="1"/>
        <end position="726"/>
    </location>
</feature>
<feature type="region of interest" description="Disordered" evidence="2">
    <location>
        <begin position="1"/>
        <end position="33"/>
    </location>
</feature>
<feature type="active site" description="Proton acceptor" evidence="1">
    <location>
        <position position="106"/>
    </location>
</feature>
<feature type="binding site" description="axial binding residue" evidence="1">
    <location>
        <position position="267"/>
    </location>
    <ligand>
        <name>heme b</name>
        <dbReference type="ChEBI" id="CHEBI:60344"/>
    </ligand>
    <ligandPart>
        <name>Fe</name>
        <dbReference type="ChEBI" id="CHEBI:18248"/>
    </ligandPart>
</feature>
<feature type="site" description="Transition state stabilizer" evidence="1">
    <location>
        <position position="102"/>
    </location>
</feature>
<feature type="cross-link" description="Tryptophyl-tyrosyl-methioninium (Trp-Tyr) (with M-252)" evidence="1">
    <location>
        <begin position="105"/>
        <end position="226"/>
    </location>
</feature>
<feature type="cross-link" description="Tryptophyl-tyrosyl-methioninium (Tyr-Met) (with W-105)" evidence="1">
    <location>
        <begin position="226"/>
        <end position="252"/>
    </location>
</feature>